<name>EX7L_SHELP</name>
<sequence length="442" mass="49219">MKMPKNNVYTVSRLNGEVRQLLEGELGKVWLEAEISNFSAPSSGHWYLTLKDNYAQIRAAMFKGRNRAVTFRPANGQQVLVKGAISVYEPRGDYQLIIDSMLPAGDGLLAQQYEALKMKLAAEGLFAADTKRPLPSNIQRIGVVTSATGAAIRDVLHVLKRRDPSIEVIIYPSQVQGEHADKSLCHAIMQANDRMEVDVLLLTRGGGSLEDLWCFNSEALAHTIYNSALPVVSAVGHEVDTTISDYVADLRAPTPSAAAELLSQDALSKADKLRMTMTRLKQGWQHYGLKQAQRFSQLHHRLERQDPKRRLQQYEQRFDELQLRLGAALTGKLHQMERRQQSLHARLNQVSPSHQLALAASRLTHQNQRLHSAMQARLNSAEKSLQYAAHQLETVSPLATLSRGYSITLDTEGKVLHSAQDVRTGARLTTKLVDGEVQSTVI</sequence>
<keyword id="KW-0963">Cytoplasm</keyword>
<keyword id="KW-0269">Exonuclease</keyword>
<keyword id="KW-0378">Hydrolase</keyword>
<keyword id="KW-0540">Nuclease</keyword>
<keyword id="KW-1185">Reference proteome</keyword>
<protein>
    <recommendedName>
        <fullName evidence="1">Exodeoxyribonuclease 7 large subunit</fullName>
        <ecNumber evidence="1">3.1.11.6</ecNumber>
    </recommendedName>
    <alternativeName>
        <fullName evidence="1">Exodeoxyribonuclease VII large subunit</fullName>
        <shortName evidence="1">Exonuclease VII large subunit</shortName>
    </alternativeName>
</protein>
<accession>A3QCG8</accession>
<comment type="function">
    <text evidence="1">Bidirectionally degrades single-stranded DNA into large acid-insoluble oligonucleotides, which are then degraded further into small acid-soluble oligonucleotides.</text>
</comment>
<comment type="catalytic activity">
    <reaction evidence="1">
        <text>Exonucleolytic cleavage in either 5'- to 3'- or 3'- to 5'-direction to yield nucleoside 5'-phosphates.</text>
        <dbReference type="EC" id="3.1.11.6"/>
    </reaction>
</comment>
<comment type="subunit">
    <text evidence="1">Heterooligomer composed of large and small subunits.</text>
</comment>
<comment type="subcellular location">
    <subcellularLocation>
        <location evidence="1">Cytoplasm</location>
    </subcellularLocation>
</comment>
<comment type="similarity">
    <text evidence="1">Belongs to the XseA family.</text>
</comment>
<evidence type="ECO:0000255" key="1">
    <source>
        <dbReference type="HAMAP-Rule" id="MF_00378"/>
    </source>
</evidence>
<proteinExistence type="inferred from homology"/>
<feature type="chain" id="PRO_0000303817" description="Exodeoxyribonuclease 7 large subunit">
    <location>
        <begin position="1"/>
        <end position="442"/>
    </location>
</feature>
<reference key="1">
    <citation type="submission" date="2007-03" db="EMBL/GenBank/DDBJ databases">
        <title>Complete sequence of Shewanella loihica PV-4.</title>
        <authorList>
            <consortium name="US DOE Joint Genome Institute"/>
            <person name="Copeland A."/>
            <person name="Lucas S."/>
            <person name="Lapidus A."/>
            <person name="Barry K."/>
            <person name="Detter J.C."/>
            <person name="Glavina del Rio T."/>
            <person name="Hammon N."/>
            <person name="Israni S."/>
            <person name="Dalin E."/>
            <person name="Tice H."/>
            <person name="Pitluck S."/>
            <person name="Chain P."/>
            <person name="Malfatti S."/>
            <person name="Shin M."/>
            <person name="Vergez L."/>
            <person name="Schmutz J."/>
            <person name="Larimer F."/>
            <person name="Land M."/>
            <person name="Hauser L."/>
            <person name="Kyrpides N."/>
            <person name="Mikhailova N."/>
            <person name="Romine M.F."/>
            <person name="Serres G."/>
            <person name="Fredrickson J."/>
            <person name="Tiedje J."/>
            <person name="Richardson P."/>
        </authorList>
    </citation>
    <scope>NUCLEOTIDE SEQUENCE [LARGE SCALE GENOMIC DNA]</scope>
    <source>
        <strain>ATCC BAA-1088 / PV-4</strain>
    </source>
</reference>
<organism>
    <name type="scientific">Shewanella loihica (strain ATCC BAA-1088 / PV-4)</name>
    <dbReference type="NCBI Taxonomy" id="323850"/>
    <lineage>
        <taxon>Bacteria</taxon>
        <taxon>Pseudomonadati</taxon>
        <taxon>Pseudomonadota</taxon>
        <taxon>Gammaproteobacteria</taxon>
        <taxon>Alteromonadales</taxon>
        <taxon>Shewanellaceae</taxon>
        <taxon>Shewanella</taxon>
    </lineage>
</organism>
<dbReference type="EC" id="3.1.11.6" evidence="1"/>
<dbReference type="EMBL" id="CP000606">
    <property type="protein sequence ID" value="ABO23166.1"/>
    <property type="molecule type" value="Genomic_DNA"/>
</dbReference>
<dbReference type="RefSeq" id="WP_011865098.1">
    <property type="nucleotide sequence ID" value="NC_009092.1"/>
</dbReference>
<dbReference type="SMR" id="A3QCG8"/>
<dbReference type="STRING" id="323850.Shew_1296"/>
<dbReference type="KEGG" id="slo:Shew_1296"/>
<dbReference type="eggNOG" id="COG1570">
    <property type="taxonomic scope" value="Bacteria"/>
</dbReference>
<dbReference type="HOGENOM" id="CLU_023625_3_1_6"/>
<dbReference type="OrthoDB" id="9802795at2"/>
<dbReference type="Proteomes" id="UP000001558">
    <property type="component" value="Chromosome"/>
</dbReference>
<dbReference type="GO" id="GO:0005737">
    <property type="term" value="C:cytoplasm"/>
    <property type="evidence" value="ECO:0007669"/>
    <property type="project" value="UniProtKB-SubCell"/>
</dbReference>
<dbReference type="GO" id="GO:0009318">
    <property type="term" value="C:exodeoxyribonuclease VII complex"/>
    <property type="evidence" value="ECO:0007669"/>
    <property type="project" value="InterPro"/>
</dbReference>
<dbReference type="GO" id="GO:0008855">
    <property type="term" value="F:exodeoxyribonuclease VII activity"/>
    <property type="evidence" value="ECO:0007669"/>
    <property type="project" value="UniProtKB-UniRule"/>
</dbReference>
<dbReference type="GO" id="GO:0003676">
    <property type="term" value="F:nucleic acid binding"/>
    <property type="evidence" value="ECO:0007669"/>
    <property type="project" value="InterPro"/>
</dbReference>
<dbReference type="GO" id="GO:0006308">
    <property type="term" value="P:DNA catabolic process"/>
    <property type="evidence" value="ECO:0007669"/>
    <property type="project" value="UniProtKB-UniRule"/>
</dbReference>
<dbReference type="CDD" id="cd04489">
    <property type="entry name" value="ExoVII_LU_OBF"/>
    <property type="match status" value="1"/>
</dbReference>
<dbReference type="HAMAP" id="MF_00378">
    <property type="entry name" value="Exonuc_7_L"/>
    <property type="match status" value="1"/>
</dbReference>
<dbReference type="InterPro" id="IPR003753">
    <property type="entry name" value="Exonuc_VII_L"/>
</dbReference>
<dbReference type="InterPro" id="IPR020579">
    <property type="entry name" value="Exonuc_VII_lsu_C"/>
</dbReference>
<dbReference type="InterPro" id="IPR025824">
    <property type="entry name" value="OB-fold_nuc-bd_dom"/>
</dbReference>
<dbReference type="NCBIfam" id="TIGR00237">
    <property type="entry name" value="xseA"/>
    <property type="match status" value="1"/>
</dbReference>
<dbReference type="PANTHER" id="PTHR30008">
    <property type="entry name" value="EXODEOXYRIBONUCLEASE 7 LARGE SUBUNIT"/>
    <property type="match status" value="1"/>
</dbReference>
<dbReference type="PANTHER" id="PTHR30008:SF0">
    <property type="entry name" value="EXODEOXYRIBONUCLEASE 7 LARGE SUBUNIT"/>
    <property type="match status" value="1"/>
</dbReference>
<dbReference type="Pfam" id="PF02601">
    <property type="entry name" value="Exonuc_VII_L"/>
    <property type="match status" value="1"/>
</dbReference>
<dbReference type="Pfam" id="PF13742">
    <property type="entry name" value="tRNA_anti_2"/>
    <property type="match status" value="1"/>
</dbReference>
<gene>
    <name evidence="1" type="primary">xseA</name>
    <name type="ordered locus">Shew_1296</name>
</gene>